<sequence length="101" mass="11121">MKVSAALLCLLLIAAALTTQVLTQPDAIISPVTCCYTLTNKKISIQRLASYKRVTSSKCPKEAVIFKTVLNKEICADPKQKWVQDSMAHLDKKSQTQTAKP</sequence>
<comment type="function">
    <text evidence="2 3 4">Acts as a ligand for C-C chemokine receptor CCR2 (By similarity). Signals through binding and activation of CCR2 and induces a strong chemotactic response and mobilization of intracellular calcium ions (By similarity). Exhibits a chemotactic activity for monocytes and basophils but not neutrophils or eosinophils (By similarity). Plays an important role in mediating peripheral nerve injury-induced neuropathic pain (By similarity). Increases NMDA-mediated synaptic transmission in both dopamine D1 and D2 receptor-containing neurons, which may be caused by MAPK/ERK-dependent phosphorylation of GRIN2B/NMDAR2B (By similarity). May play a significant role in monocyte trafficking into the reperfused myocardium (PubMed:9024159).</text>
</comment>
<comment type="subunit">
    <text evidence="3">Monomer or homodimer; in equilibrium. Is tethered on endothelial cells by glycosaminoglycan (GAG) side chains of proteoglycans. Interacts with TNFAIP6 (via Link domain).</text>
</comment>
<comment type="subcellular location">
    <subcellularLocation>
        <location evidence="3">Secreted</location>
    </subcellularLocation>
</comment>
<comment type="tissue specificity">
    <text evidence="4">Endothelium of small veins and intrafascicular veins, and infiltrating leukocytes.</text>
</comment>
<comment type="induction">
    <text evidence="4">By TNF-alpha.</text>
</comment>
<comment type="PTM">
    <text evidence="3">Processing at the N-terminus can regulate receptor and target cell selectivity (By similarity). Deletion of the N-terminal residue converts it from an activator of basophil to an eosinophil chemoattractant (By similarity).</text>
</comment>
<comment type="PTM">
    <text evidence="3">N-Glycosylated.</text>
</comment>
<comment type="similarity">
    <text evidence="5">Belongs to the intercrine beta (chemokine CC) family.</text>
</comment>
<protein>
    <recommendedName>
        <fullName>C-C motif chemokine 2</fullName>
    </recommendedName>
    <alternativeName>
        <fullName>Monocyte chemoattractant protein 1</fullName>
    </alternativeName>
    <alternativeName>
        <fullName>Monocyte chemotactic protein 1</fullName>
        <shortName>MCP-1</shortName>
    </alternativeName>
    <alternativeName>
        <fullName>Small-inducible cytokine A2</fullName>
    </alternativeName>
</protein>
<reference key="1">
    <citation type="journal article" date="1997" name="Circulation">
        <title>Induction of monocyte chemoattractant protein-1 in the small veins of the ischemic and reperfused canine myocardium.</title>
        <authorList>
            <person name="Kumar A.G."/>
            <person name="Ballantyne C.M."/>
            <person name="Michael L.H."/>
            <person name="Kukielka G.L."/>
            <person name="Youker K.A."/>
            <person name="Lindsey M.L."/>
            <person name="Hawkins H.K."/>
            <person name="Birdsall H.H."/>
            <person name="Mackay C.R."/>
            <person name="Larosa G.J."/>
            <person name="Rossen R.D."/>
            <person name="Smith C.W."/>
            <person name="Entman M.L."/>
        </authorList>
    </citation>
    <scope>NUCLEOTIDE SEQUENCE [MRNA]</scope>
    <scope>FUNCTION</scope>
    <scope>INDUCTION</scope>
    <scope>TISSUE SPECIFICITY</scope>
    <source>
        <tissue>Jugular vein endothelial cell</tissue>
    </source>
</reference>
<accession>P52203</accession>
<gene>
    <name type="primary">CCL2</name>
    <name type="synonym">MCP1</name>
    <name type="synonym">SCYA2</name>
</gene>
<feature type="signal peptide" evidence="1">
    <location>
        <begin position="1"/>
        <end position="23"/>
    </location>
</feature>
<feature type="chain" id="PRO_0000005143" description="C-C motif chemokine 2">
    <location>
        <begin position="24"/>
        <end position="101"/>
    </location>
</feature>
<feature type="modified residue" description="Pyrrolidone carboxylic acid" evidence="3">
    <location>
        <position position="24"/>
    </location>
</feature>
<feature type="disulfide bond" evidence="1">
    <location>
        <begin position="34"/>
        <end position="59"/>
    </location>
</feature>
<feature type="disulfide bond" evidence="1">
    <location>
        <begin position="35"/>
        <end position="75"/>
    </location>
</feature>
<evidence type="ECO:0000250" key="1"/>
<evidence type="ECO:0000250" key="2">
    <source>
        <dbReference type="UniProtKB" id="P10148"/>
    </source>
</evidence>
<evidence type="ECO:0000250" key="3">
    <source>
        <dbReference type="UniProtKB" id="P13500"/>
    </source>
</evidence>
<evidence type="ECO:0000269" key="4">
    <source>
    </source>
</evidence>
<evidence type="ECO:0000305" key="5"/>
<name>CCL2_CANLF</name>
<organism>
    <name type="scientific">Canis lupus familiaris</name>
    <name type="common">Dog</name>
    <name type="synonym">Canis familiaris</name>
    <dbReference type="NCBI Taxonomy" id="9615"/>
    <lineage>
        <taxon>Eukaryota</taxon>
        <taxon>Metazoa</taxon>
        <taxon>Chordata</taxon>
        <taxon>Craniata</taxon>
        <taxon>Vertebrata</taxon>
        <taxon>Euteleostomi</taxon>
        <taxon>Mammalia</taxon>
        <taxon>Eutheria</taxon>
        <taxon>Laurasiatheria</taxon>
        <taxon>Carnivora</taxon>
        <taxon>Caniformia</taxon>
        <taxon>Canidae</taxon>
        <taxon>Canis</taxon>
    </lineage>
</organism>
<proteinExistence type="evidence at transcript level"/>
<keyword id="KW-0145">Chemotaxis</keyword>
<keyword id="KW-0202">Cytokine</keyword>
<keyword id="KW-1015">Disulfide bond</keyword>
<keyword id="KW-0395">Inflammatory response</keyword>
<keyword id="KW-0873">Pyrrolidone carboxylic acid</keyword>
<keyword id="KW-1185">Reference proteome</keyword>
<keyword id="KW-0964">Secreted</keyword>
<keyword id="KW-0732">Signal</keyword>
<dbReference type="EMBL" id="U29653">
    <property type="protein sequence ID" value="AAA84911.1"/>
    <property type="molecule type" value="mRNA"/>
</dbReference>
<dbReference type="RefSeq" id="NP_001003297.1">
    <property type="nucleotide sequence ID" value="NM_001003297.1"/>
</dbReference>
<dbReference type="SMR" id="P52203"/>
<dbReference type="FunCoup" id="P52203">
    <property type="interactions" value="287"/>
</dbReference>
<dbReference type="STRING" id="9615.ENSCAFP00000027107"/>
<dbReference type="PaxDb" id="9612-ENSCAFP00000027107"/>
<dbReference type="GeneID" id="403981"/>
<dbReference type="KEGG" id="cfa:403981"/>
<dbReference type="CTD" id="6347"/>
<dbReference type="eggNOG" id="ENOG502S6ZP">
    <property type="taxonomic scope" value="Eukaryota"/>
</dbReference>
<dbReference type="InParanoid" id="P52203"/>
<dbReference type="OrthoDB" id="8934837at2759"/>
<dbReference type="Proteomes" id="UP000002254">
    <property type="component" value="Unplaced"/>
</dbReference>
<dbReference type="Proteomes" id="UP000694429">
    <property type="component" value="Unplaced"/>
</dbReference>
<dbReference type="Proteomes" id="UP000694542">
    <property type="component" value="Unplaced"/>
</dbReference>
<dbReference type="Proteomes" id="UP000805418">
    <property type="component" value="Unplaced"/>
</dbReference>
<dbReference type="GO" id="GO:0005615">
    <property type="term" value="C:extracellular space"/>
    <property type="evidence" value="ECO:0000318"/>
    <property type="project" value="GO_Central"/>
</dbReference>
<dbReference type="GO" id="GO:0048020">
    <property type="term" value="F:CCR chemokine receptor binding"/>
    <property type="evidence" value="ECO:0000318"/>
    <property type="project" value="GO_Central"/>
</dbReference>
<dbReference type="GO" id="GO:0008009">
    <property type="term" value="F:chemokine activity"/>
    <property type="evidence" value="ECO:0000318"/>
    <property type="project" value="GO_Central"/>
</dbReference>
<dbReference type="GO" id="GO:0061844">
    <property type="term" value="P:antimicrobial humoral immune response mediated by antimicrobial peptide"/>
    <property type="evidence" value="ECO:0000318"/>
    <property type="project" value="GO_Central"/>
</dbReference>
<dbReference type="GO" id="GO:0070098">
    <property type="term" value="P:chemokine-mediated signaling pathway"/>
    <property type="evidence" value="ECO:0000318"/>
    <property type="project" value="GO_Central"/>
</dbReference>
<dbReference type="GO" id="GO:0048245">
    <property type="term" value="P:eosinophil chemotaxis"/>
    <property type="evidence" value="ECO:0000318"/>
    <property type="project" value="GO_Central"/>
</dbReference>
<dbReference type="GO" id="GO:0006954">
    <property type="term" value="P:inflammatory response"/>
    <property type="evidence" value="ECO:0000318"/>
    <property type="project" value="GO_Central"/>
</dbReference>
<dbReference type="GO" id="GO:0030335">
    <property type="term" value="P:positive regulation of cell migration"/>
    <property type="evidence" value="ECO:0000318"/>
    <property type="project" value="GO_Central"/>
</dbReference>
<dbReference type="GO" id="GO:0051968">
    <property type="term" value="P:positive regulation of synaptic transmission, glutamatergic"/>
    <property type="evidence" value="ECO:0000250"/>
    <property type="project" value="UniProtKB"/>
</dbReference>
<dbReference type="GO" id="GO:0019233">
    <property type="term" value="P:sensory perception of pain"/>
    <property type="evidence" value="ECO:0000250"/>
    <property type="project" value="UniProtKB"/>
</dbReference>
<dbReference type="CDD" id="cd00272">
    <property type="entry name" value="Chemokine_CC"/>
    <property type="match status" value="1"/>
</dbReference>
<dbReference type="FunFam" id="2.40.50.40:FF:000002">
    <property type="entry name" value="C-C motif chemokine"/>
    <property type="match status" value="1"/>
</dbReference>
<dbReference type="Gene3D" id="2.40.50.40">
    <property type="match status" value="1"/>
</dbReference>
<dbReference type="InterPro" id="IPR039809">
    <property type="entry name" value="Chemokine_b/g/d"/>
</dbReference>
<dbReference type="InterPro" id="IPR000827">
    <property type="entry name" value="Chemokine_CC_CS"/>
</dbReference>
<dbReference type="InterPro" id="IPR001811">
    <property type="entry name" value="Chemokine_IL8-like_dom"/>
</dbReference>
<dbReference type="InterPro" id="IPR036048">
    <property type="entry name" value="Interleukin_8-like_sf"/>
</dbReference>
<dbReference type="PANTHER" id="PTHR12015:SF98">
    <property type="entry name" value="C-C MOTIF CHEMOKINE 2"/>
    <property type="match status" value="1"/>
</dbReference>
<dbReference type="PANTHER" id="PTHR12015">
    <property type="entry name" value="SMALL INDUCIBLE CYTOKINE A"/>
    <property type="match status" value="1"/>
</dbReference>
<dbReference type="Pfam" id="PF00048">
    <property type="entry name" value="IL8"/>
    <property type="match status" value="1"/>
</dbReference>
<dbReference type="PRINTS" id="PR01721">
    <property type="entry name" value="FRACTALKINE"/>
</dbReference>
<dbReference type="SMART" id="SM00199">
    <property type="entry name" value="SCY"/>
    <property type="match status" value="1"/>
</dbReference>
<dbReference type="SUPFAM" id="SSF54117">
    <property type="entry name" value="Interleukin 8-like chemokines"/>
    <property type="match status" value="1"/>
</dbReference>
<dbReference type="PROSITE" id="PS00472">
    <property type="entry name" value="SMALL_CYTOKINES_CC"/>
    <property type="match status" value="1"/>
</dbReference>